<comment type="function">
    <text evidence="1">Immediate early (EI) protein that plays many roles during productive infection including regulation of host cell cycle progression, regulation of viral gene expression or nuclear export of intronless viral RNAs. Acts as a transcriptional transactivator via interaction with the cellular transcription elongation factor SUPT6H and as a nuclear RNA export factor via interaction with UAP56, a component of the cellular mRNA export machinery (By similarity).</text>
</comment>
<comment type="subunit">
    <text evidence="1">Self-associates and forms high-molecular-mass complexes. Interacts with host DDX39A and DDX39B; these interactions are required for UL69 function in mRNA export. Interacts with host SUPT6H, EIF4A1 and PABPC1 (By similarity).</text>
</comment>
<comment type="subcellular location">
    <subcellularLocation>
        <location evidence="1">Virion tegument</location>
    </subcellularLocation>
    <subcellularLocation>
        <location evidence="1">Virion</location>
    </subcellularLocation>
    <subcellularLocation>
        <location evidence="4">Host nucleus</location>
    </subcellularLocation>
    <subcellularLocation>
        <location evidence="4">Host cytoplasm</location>
    </subcellularLocation>
    <text>Shuttles between host nucleus and cytoplasm.</text>
</comment>
<comment type="PTM">
    <text evidence="1">Phosphorylated by UL97 and host CDK1, CDK7 and CD9. Phosphorylation by CDKs impacts on UL69 nuclear localization and activity (By similarity).</text>
</comment>
<comment type="similarity">
    <text evidence="5">Belongs to the HHV-1 ICP27 protein family.</text>
</comment>
<organism>
    <name type="scientific">Human cytomegalovirus (strain Merlin)</name>
    <name type="common">HHV-5</name>
    <name type="synonym">Human herpesvirus 5</name>
    <dbReference type="NCBI Taxonomy" id="295027"/>
    <lineage>
        <taxon>Viruses</taxon>
        <taxon>Duplodnaviria</taxon>
        <taxon>Heunggongvirae</taxon>
        <taxon>Peploviricota</taxon>
        <taxon>Herviviricetes</taxon>
        <taxon>Herpesvirales</taxon>
        <taxon>Orthoherpesviridae</taxon>
        <taxon>Betaherpesvirinae</taxon>
        <taxon>Cytomegalovirus</taxon>
        <taxon>Cytomegalovirus humanbeta5</taxon>
        <taxon>Human cytomegalovirus</taxon>
    </lineage>
</organism>
<keyword id="KW-1078">G1/S host cell cycle checkpoint dysregulation by virus</keyword>
<keyword id="KW-1035">Host cytoplasm</keyword>
<keyword id="KW-1048">Host nucleus</keyword>
<keyword id="KW-0945">Host-virus interaction</keyword>
<keyword id="KW-0479">Metal-binding</keyword>
<keyword id="KW-1121">Modulation of host cell cycle by virus</keyword>
<keyword id="KW-0597">Phosphoprotein</keyword>
<keyword id="KW-1185">Reference proteome</keyword>
<keyword id="KW-0804">Transcription</keyword>
<keyword id="KW-0805">Transcription regulation</keyword>
<keyword id="KW-0946">Virion</keyword>
<keyword id="KW-0920">Virion tegument</keyword>
<keyword id="KW-0862">Zinc</keyword>
<keyword id="KW-0863">Zinc-finger</keyword>
<protein>
    <recommendedName>
        <fullName>mRNA export factor ICP27 homolog</fullName>
    </recommendedName>
</protein>
<sequence>MELHSRGRHDAPSLSSLSERERRARRARRFCLDYEPVPRKFRRERSPTSPSTRNGAAASEYHLAEDTVGAASHHHRPCVPARRPRYSKDDDTEGDPDHYPPPLPPSSRHALGGTGGHIIMGTAGFRGGHRASSSFKRRVAASASVPLNPHYGKSYDNDDGEPHHHGGDSTHLRRRVPSCPTTFGSSHPSSANNHHGSSAGPQQQQMLALIDDELDAMDEDELQQLSRLIEKKKRARLQRGAASSGTSPSSTSPVYDLQRYTAESLRLAPYPADLKVPTAFPQDHQPRGRILLSHDELMHTDYLLHIRQQFDWLEEPLLRKLVVEKIFAVYNAPNLHTLLAIIDETLSYMKYHHLHGLPVNPHDPYLETVGGMRQLLFNKLNNLDLGCILDHQDGWGDHCSTLKRLVKKPGQMSAWLRDDVCDLQKRPPETFSQPMHRAMAYVCSFSRVAVSLRRRALQVTGTPQFFDQFDTNNAMGTYRCGAVSDLILGALQCHECQNEMCELRIQRALAPYRFMIAYCPFDEQSLLDLTVFAGTTTTTASNHATAGGQQRGGDQIHPTDEQCASMESRTDPATLTAYDKKDREGSHRHPSPMIAAAAPPAQPPSQPQQHYSEGELEEDEDSDDASSQDLVRATDRHGDTVVYKTTAVPPSPPAPLAGVRSHRGELNLMTPSPSHGGSPPQVPHKQPIIPVQSANGNHSTTATQQQQPPPPPPVPQEDDSVVMRCQTPDYEDMLCYSDDMDD</sequence>
<reference key="1">
    <citation type="journal article" date="2004" name="J. Gen. Virol.">
        <title>Genetic content of wild-type human cytomegalovirus.</title>
        <authorList>
            <person name="Dolan A."/>
            <person name="Cunningham C."/>
            <person name="Hector R.D."/>
            <person name="Hassan-Walker A.F."/>
            <person name="Lee L."/>
            <person name="Addison C."/>
            <person name="Dargan D.J."/>
            <person name="McGeoch D.J."/>
            <person name="Gatherer D."/>
            <person name="Emery V.C."/>
            <person name="Griffiths P.D."/>
            <person name="Sinzger C."/>
            <person name="McSharry B.P."/>
            <person name="Wilkinson G.W.G."/>
            <person name="Davison A.J."/>
        </authorList>
    </citation>
    <scope>NUCLEOTIDE SEQUENCE [LARGE SCALE GENOMIC DNA]</scope>
</reference>
<reference key="2">
    <citation type="journal article" date="2007" name="J. Gen. Virol.">
        <title>Multimerization of human cytomegalovirus regulatory protein UL69 via a domain that is conserved within its herpesvirus homologues.</title>
        <authorList>
            <person name="Lischka P."/>
            <person name="Thomas M."/>
            <person name="Toth Z."/>
            <person name="Mueller R."/>
            <person name="Stamminger T."/>
        </authorList>
    </citation>
    <scope>SUBCELLULAR LOCATION</scope>
    <scope>MULTIMERIZATION</scope>
</reference>
<feature type="chain" id="PRO_0000416711" description="mRNA export factor ICP27 homolog">
    <location>
        <begin position="1"/>
        <end position="742"/>
    </location>
</feature>
<feature type="zinc finger region" description="CHC2-type" evidence="2">
    <location>
        <begin position="387"/>
        <end position="501"/>
    </location>
</feature>
<feature type="region of interest" description="Disordered" evidence="3">
    <location>
        <begin position="1"/>
        <end position="202"/>
    </location>
</feature>
<feature type="region of interest" description="Disordered" evidence="3">
    <location>
        <begin position="540"/>
        <end position="742"/>
    </location>
</feature>
<feature type="compositionally biased region" description="Basic and acidic residues" evidence="3">
    <location>
        <begin position="1"/>
        <end position="11"/>
    </location>
</feature>
<feature type="compositionally biased region" description="Basic residues" evidence="3">
    <location>
        <begin position="72"/>
        <end position="85"/>
    </location>
</feature>
<feature type="compositionally biased region" description="Basic and acidic residues" evidence="3">
    <location>
        <begin position="153"/>
        <end position="171"/>
    </location>
</feature>
<feature type="compositionally biased region" description="Polar residues" evidence="3">
    <location>
        <begin position="179"/>
        <end position="202"/>
    </location>
</feature>
<feature type="compositionally biased region" description="Basic and acidic residues" evidence="3">
    <location>
        <begin position="578"/>
        <end position="587"/>
    </location>
</feature>
<feature type="compositionally biased region" description="Acidic residues" evidence="3">
    <location>
        <begin position="614"/>
        <end position="626"/>
    </location>
</feature>
<feature type="compositionally biased region" description="Polar residues" evidence="3">
    <location>
        <begin position="692"/>
        <end position="703"/>
    </location>
</feature>
<feature type="binding site" evidence="2">
    <location>
        <position position="387"/>
    </location>
    <ligand>
        <name>Zn(2+)</name>
        <dbReference type="ChEBI" id="CHEBI:29105"/>
    </ligand>
</feature>
<feature type="binding site" evidence="2">
    <location>
        <position position="494"/>
    </location>
    <ligand>
        <name>Zn(2+)</name>
        <dbReference type="ChEBI" id="CHEBI:29105"/>
    </ligand>
</feature>
<feature type="binding site" evidence="2">
    <location>
        <position position="496"/>
    </location>
    <ligand>
        <name>Zn(2+)</name>
        <dbReference type="ChEBI" id="CHEBI:29105"/>
    </ligand>
</feature>
<feature type="binding site" evidence="2">
    <location>
        <position position="501"/>
    </location>
    <ligand>
        <name>Zn(2+)</name>
        <dbReference type="ChEBI" id="CHEBI:29105"/>
    </ligand>
</feature>
<proteinExistence type="inferred from homology"/>
<dbReference type="EMBL" id="AY446894">
    <property type="protein sequence ID" value="AAR31623.1"/>
    <property type="molecule type" value="Genomic_DNA"/>
</dbReference>
<dbReference type="RefSeq" id="YP_081517.1">
    <property type="nucleotide sequence ID" value="NC_006273.2"/>
</dbReference>
<dbReference type="GeneID" id="3077554"/>
<dbReference type="KEGG" id="vg:3077554"/>
<dbReference type="Reactome" id="R-HSA-9609690">
    <property type="pathway name" value="HCMV Early Events"/>
</dbReference>
<dbReference type="Reactome" id="R-HSA-9610379">
    <property type="pathway name" value="HCMV Late Events"/>
</dbReference>
<dbReference type="Proteomes" id="UP000000938">
    <property type="component" value="Segment"/>
</dbReference>
<dbReference type="GO" id="GO:0042025">
    <property type="term" value="C:host cell nucleus"/>
    <property type="evidence" value="ECO:0007669"/>
    <property type="project" value="UniProtKB-SubCell"/>
</dbReference>
<dbReference type="GO" id="GO:0072517">
    <property type="term" value="C:host cell viral assembly compartment"/>
    <property type="evidence" value="ECO:0000304"/>
    <property type="project" value="Reactome"/>
</dbReference>
<dbReference type="GO" id="GO:0019033">
    <property type="term" value="C:viral tegument"/>
    <property type="evidence" value="ECO:0000304"/>
    <property type="project" value="Reactome"/>
</dbReference>
<dbReference type="GO" id="GO:0008270">
    <property type="term" value="F:zinc ion binding"/>
    <property type="evidence" value="ECO:0007669"/>
    <property type="project" value="UniProtKB-KW"/>
</dbReference>
<dbReference type="GO" id="GO:0006355">
    <property type="term" value="P:regulation of DNA-templated transcription"/>
    <property type="evidence" value="ECO:0007669"/>
    <property type="project" value="InterPro"/>
</dbReference>
<dbReference type="GO" id="GO:0039645">
    <property type="term" value="P:symbiont-mediated perturbation of host cell cycle G1/S transition checkpoint"/>
    <property type="evidence" value="ECO:0007669"/>
    <property type="project" value="UniProtKB-KW"/>
</dbReference>
<dbReference type="InterPro" id="IPR008648">
    <property type="entry name" value="ICP27-like"/>
</dbReference>
<dbReference type="Pfam" id="PF05459">
    <property type="entry name" value="Herpes_UL69"/>
    <property type="match status" value="1"/>
</dbReference>
<organismHost>
    <name type="scientific">Homo sapiens</name>
    <name type="common">Human</name>
    <dbReference type="NCBI Taxonomy" id="9606"/>
</organismHost>
<gene>
    <name type="ORF">UL69</name>
</gene>
<name>ICP27_HCMVM</name>
<evidence type="ECO:0000250" key="1"/>
<evidence type="ECO:0000250" key="2">
    <source>
        <dbReference type="UniProtKB" id="P10238"/>
    </source>
</evidence>
<evidence type="ECO:0000256" key="3">
    <source>
        <dbReference type="SAM" id="MobiDB-lite"/>
    </source>
</evidence>
<evidence type="ECO:0000269" key="4">
    <source>
    </source>
</evidence>
<evidence type="ECO:0000305" key="5"/>
<accession>Q6SW73</accession>
<accession>D2K3M6</accession>